<feature type="chain" id="PRO_1000020348" description="Threonine--tRNA ligase">
    <location>
        <begin position="1"/>
        <end position="649"/>
    </location>
</feature>
<feature type="domain" description="TGS" evidence="2">
    <location>
        <begin position="1"/>
        <end position="66"/>
    </location>
</feature>
<feature type="region of interest" description="Catalytic" evidence="1">
    <location>
        <begin position="247"/>
        <end position="538"/>
    </location>
</feature>
<feature type="binding site" evidence="1">
    <location>
        <position position="338"/>
    </location>
    <ligand>
        <name>Zn(2+)</name>
        <dbReference type="ChEBI" id="CHEBI:29105"/>
    </ligand>
</feature>
<feature type="binding site" evidence="1">
    <location>
        <position position="389"/>
    </location>
    <ligand>
        <name>Zn(2+)</name>
        <dbReference type="ChEBI" id="CHEBI:29105"/>
    </ligand>
</feature>
<feature type="binding site" evidence="1">
    <location>
        <position position="515"/>
    </location>
    <ligand>
        <name>Zn(2+)</name>
        <dbReference type="ChEBI" id="CHEBI:29105"/>
    </ligand>
</feature>
<organism>
    <name type="scientific">Bordetella parapertussis (strain 12822 / ATCC BAA-587 / NCTC 13253)</name>
    <dbReference type="NCBI Taxonomy" id="257311"/>
    <lineage>
        <taxon>Bacteria</taxon>
        <taxon>Pseudomonadati</taxon>
        <taxon>Pseudomonadota</taxon>
        <taxon>Betaproteobacteria</taxon>
        <taxon>Burkholderiales</taxon>
        <taxon>Alcaligenaceae</taxon>
        <taxon>Bordetella</taxon>
    </lineage>
</organism>
<accession>Q7W912</accession>
<protein>
    <recommendedName>
        <fullName evidence="1">Threonine--tRNA ligase</fullName>
        <ecNumber evidence="1">6.1.1.3</ecNumber>
    </recommendedName>
    <alternativeName>
        <fullName evidence="1">Threonyl-tRNA synthetase</fullName>
        <shortName evidence="1">ThrRS</shortName>
    </alternativeName>
</protein>
<proteinExistence type="inferred from homology"/>
<dbReference type="EC" id="6.1.1.3" evidence="1"/>
<dbReference type="EMBL" id="BX640429">
    <property type="protein sequence ID" value="CAE37262.1"/>
    <property type="molecule type" value="Genomic_DNA"/>
</dbReference>
<dbReference type="RefSeq" id="WP_003812608.1">
    <property type="nucleotide sequence ID" value="NC_002928.3"/>
</dbReference>
<dbReference type="SMR" id="Q7W912"/>
<dbReference type="GeneID" id="93203735"/>
<dbReference type="KEGG" id="bpa:BPP1963"/>
<dbReference type="HOGENOM" id="CLU_008554_0_1_4"/>
<dbReference type="Proteomes" id="UP000001421">
    <property type="component" value="Chromosome"/>
</dbReference>
<dbReference type="GO" id="GO:0005829">
    <property type="term" value="C:cytosol"/>
    <property type="evidence" value="ECO:0007669"/>
    <property type="project" value="TreeGrafter"/>
</dbReference>
<dbReference type="GO" id="GO:0005524">
    <property type="term" value="F:ATP binding"/>
    <property type="evidence" value="ECO:0007669"/>
    <property type="project" value="UniProtKB-UniRule"/>
</dbReference>
<dbReference type="GO" id="GO:0046872">
    <property type="term" value="F:metal ion binding"/>
    <property type="evidence" value="ECO:0007669"/>
    <property type="project" value="UniProtKB-KW"/>
</dbReference>
<dbReference type="GO" id="GO:0004829">
    <property type="term" value="F:threonine-tRNA ligase activity"/>
    <property type="evidence" value="ECO:0007669"/>
    <property type="project" value="UniProtKB-UniRule"/>
</dbReference>
<dbReference type="GO" id="GO:0000049">
    <property type="term" value="F:tRNA binding"/>
    <property type="evidence" value="ECO:0007669"/>
    <property type="project" value="UniProtKB-KW"/>
</dbReference>
<dbReference type="GO" id="GO:0006435">
    <property type="term" value="P:threonyl-tRNA aminoacylation"/>
    <property type="evidence" value="ECO:0007669"/>
    <property type="project" value="UniProtKB-UniRule"/>
</dbReference>
<dbReference type="CDD" id="cd01667">
    <property type="entry name" value="TGS_ThrRS"/>
    <property type="match status" value="1"/>
</dbReference>
<dbReference type="CDD" id="cd00860">
    <property type="entry name" value="ThrRS_anticodon"/>
    <property type="match status" value="1"/>
</dbReference>
<dbReference type="CDD" id="cd00771">
    <property type="entry name" value="ThrRS_core"/>
    <property type="match status" value="1"/>
</dbReference>
<dbReference type="FunFam" id="3.10.20.30:FF:000005">
    <property type="entry name" value="Threonine--tRNA ligase"/>
    <property type="match status" value="1"/>
</dbReference>
<dbReference type="FunFam" id="3.30.54.20:FF:000002">
    <property type="entry name" value="Threonine--tRNA ligase"/>
    <property type="match status" value="1"/>
</dbReference>
<dbReference type="FunFam" id="3.30.930.10:FF:000002">
    <property type="entry name" value="Threonine--tRNA ligase"/>
    <property type="match status" value="1"/>
</dbReference>
<dbReference type="FunFam" id="3.40.50.800:FF:000001">
    <property type="entry name" value="Threonine--tRNA ligase"/>
    <property type="match status" value="1"/>
</dbReference>
<dbReference type="FunFam" id="3.30.980.10:FF:000005">
    <property type="entry name" value="Threonyl-tRNA synthetase, mitochondrial"/>
    <property type="match status" value="1"/>
</dbReference>
<dbReference type="Gene3D" id="3.10.20.30">
    <property type="match status" value="1"/>
</dbReference>
<dbReference type="Gene3D" id="3.30.54.20">
    <property type="match status" value="1"/>
</dbReference>
<dbReference type="Gene3D" id="3.40.50.800">
    <property type="entry name" value="Anticodon-binding domain"/>
    <property type="match status" value="1"/>
</dbReference>
<dbReference type="Gene3D" id="3.30.930.10">
    <property type="entry name" value="Bira Bifunctional Protein, Domain 2"/>
    <property type="match status" value="1"/>
</dbReference>
<dbReference type="Gene3D" id="3.30.980.10">
    <property type="entry name" value="Threonyl-trna Synthetase, Chain A, domain 2"/>
    <property type="match status" value="1"/>
</dbReference>
<dbReference type="HAMAP" id="MF_00184">
    <property type="entry name" value="Thr_tRNA_synth"/>
    <property type="match status" value="1"/>
</dbReference>
<dbReference type="InterPro" id="IPR002314">
    <property type="entry name" value="aa-tRNA-synt_IIb"/>
</dbReference>
<dbReference type="InterPro" id="IPR006195">
    <property type="entry name" value="aa-tRNA-synth_II"/>
</dbReference>
<dbReference type="InterPro" id="IPR045864">
    <property type="entry name" value="aa-tRNA-synth_II/BPL/LPL"/>
</dbReference>
<dbReference type="InterPro" id="IPR004154">
    <property type="entry name" value="Anticodon-bd"/>
</dbReference>
<dbReference type="InterPro" id="IPR036621">
    <property type="entry name" value="Anticodon-bd_dom_sf"/>
</dbReference>
<dbReference type="InterPro" id="IPR012675">
    <property type="entry name" value="Beta-grasp_dom_sf"/>
</dbReference>
<dbReference type="InterPro" id="IPR004095">
    <property type="entry name" value="TGS"/>
</dbReference>
<dbReference type="InterPro" id="IPR012676">
    <property type="entry name" value="TGS-like"/>
</dbReference>
<dbReference type="InterPro" id="IPR002320">
    <property type="entry name" value="Thr-tRNA-ligase_IIa"/>
</dbReference>
<dbReference type="InterPro" id="IPR018163">
    <property type="entry name" value="Thr/Ala-tRNA-synth_IIc_edit"/>
</dbReference>
<dbReference type="InterPro" id="IPR047246">
    <property type="entry name" value="ThrRS_anticodon"/>
</dbReference>
<dbReference type="InterPro" id="IPR033728">
    <property type="entry name" value="ThrRS_core"/>
</dbReference>
<dbReference type="InterPro" id="IPR012947">
    <property type="entry name" value="tRNA_SAD"/>
</dbReference>
<dbReference type="NCBIfam" id="TIGR00418">
    <property type="entry name" value="thrS"/>
    <property type="match status" value="1"/>
</dbReference>
<dbReference type="PANTHER" id="PTHR11451:SF44">
    <property type="entry name" value="THREONINE--TRNA LIGASE, CHLOROPLASTIC_MITOCHONDRIAL 2"/>
    <property type="match status" value="1"/>
</dbReference>
<dbReference type="PANTHER" id="PTHR11451">
    <property type="entry name" value="THREONINE-TRNA LIGASE"/>
    <property type="match status" value="1"/>
</dbReference>
<dbReference type="Pfam" id="PF03129">
    <property type="entry name" value="HGTP_anticodon"/>
    <property type="match status" value="1"/>
</dbReference>
<dbReference type="Pfam" id="PF02824">
    <property type="entry name" value="TGS"/>
    <property type="match status" value="1"/>
</dbReference>
<dbReference type="Pfam" id="PF00587">
    <property type="entry name" value="tRNA-synt_2b"/>
    <property type="match status" value="1"/>
</dbReference>
<dbReference type="Pfam" id="PF07973">
    <property type="entry name" value="tRNA_SAD"/>
    <property type="match status" value="1"/>
</dbReference>
<dbReference type="PRINTS" id="PR01047">
    <property type="entry name" value="TRNASYNTHTHR"/>
</dbReference>
<dbReference type="SMART" id="SM00863">
    <property type="entry name" value="tRNA_SAD"/>
    <property type="match status" value="1"/>
</dbReference>
<dbReference type="SUPFAM" id="SSF52954">
    <property type="entry name" value="Class II aaRS ABD-related"/>
    <property type="match status" value="1"/>
</dbReference>
<dbReference type="SUPFAM" id="SSF55681">
    <property type="entry name" value="Class II aaRS and biotin synthetases"/>
    <property type="match status" value="1"/>
</dbReference>
<dbReference type="SUPFAM" id="SSF81271">
    <property type="entry name" value="TGS-like"/>
    <property type="match status" value="1"/>
</dbReference>
<dbReference type="SUPFAM" id="SSF55186">
    <property type="entry name" value="ThrRS/AlaRS common domain"/>
    <property type="match status" value="1"/>
</dbReference>
<dbReference type="PROSITE" id="PS50862">
    <property type="entry name" value="AA_TRNA_LIGASE_II"/>
    <property type="match status" value="1"/>
</dbReference>
<dbReference type="PROSITE" id="PS51880">
    <property type="entry name" value="TGS"/>
    <property type="match status" value="1"/>
</dbReference>
<evidence type="ECO:0000255" key="1">
    <source>
        <dbReference type="HAMAP-Rule" id="MF_00184"/>
    </source>
</evidence>
<evidence type="ECO:0000255" key="2">
    <source>
        <dbReference type="PROSITE-ProRule" id="PRU01228"/>
    </source>
</evidence>
<reference key="1">
    <citation type="journal article" date="2003" name="Nat. Genet.">
        <title>Comparative analysis of the genome sequences of Bordetella pertussis, Bordetella parapertussis and Bordetella bronchiseptica.</title>
        <authorList>
            <person name="Parkhill J."/>
            <person name="Sebaihia M."/>
            <person name="Preston A."/>
            <person name="Murphy L.D."/>
            <person name="Thomson N.R."/>
            <person name="Harris D.E."/>
            <person name="Holden M.T.G."/>
            <person name="Churcher C.M."/>
            <person name="Bentley S.D."/>
            <person name="Mungall K.L."/>
            <person name="Cerdeno-Tarraga A.-M."/>
            <person name="Temple L."/>
            <person name="James K.D."/>
            <person name="Harris B."/>
            <person name="Quail M.A."/>
            <person name="Achtman M."/>
            <person name="Atkin R."/>
            <person name="Baker S."/>
            <person name="Basham D."/>
            <person name="Bason N."/>
            <person name="Cherevach I."/>
            <person name="Chillingworth T."/>
            <person name="Collins M."/>
            <person name="Cronin A."/>
            <person name="Davis P."/>
            <person name="Doggett J."/>
            <person name="Feltwell T."/>
            <person name="Goble A."/>
            <person name="Hamlin N."/>
            <person name="Hauser H."/>
            <person name="Holroyd S."/>
            <person name="Jagels K."/>
            <person name="Leather S."/>
            <person name="Moule S."/>
            <person name="Norberczak H."/>
            <person name="O'Neil S."/>
            <person name="Ormond D."/>
            <person name="Price C."/>
            <person name="Rabbinowitsch E."/>
            <person name="Rutter S."/>
            <person name="Sanders M."/>
            <person name="Saunders D."/>
            <person name="Seeger K."/>
            <person name="Sharp S."/>
            <person name="Simmonds M."/>
            <person name="Skelton J."/>
            <person name="Squares R."/>
            <person name="Squares S."/>
            <person name="Stevens K."/>
            <person name="Unwin L."/>
            <person name="Whitehead S."/>
            <person name="Barrell B.G."/>
            <person name="Maskell D.J."/>
        </authorList>
    </citation>
    <scope>NUCLEOTIDE SEQUENCE [LARGE SCALE GENOMIC DNA]</scope>
    <source>
        <strain>12822 / ATCC BAA-587 / NCTC 13253</strain>
    </source>
</reference>
<sequence length="649" mass="73324">MVQITLPDGSQRQYPGPVTVAEVAQSIGAGLAKAALAGRVAFDGAEPRLVDTSFRIDNDAQLAIVTAKDADGLDLIRHSTAHLLAYAVKSLFPDAQVTIGPVIDNGFYYDFSYKRPFTPEDLQAIEKKMAELARKDEVVTREEWSRDEAVAYFKGIGEVYKAEIIASIPSNETLSLYREGDFIDLCRGPHVPSTGKLKVFKLMKVAGAYWRGDSKNEMLQRIYGTAWASKDDQDAYLHMLEEAERRDHRKIGRELDLFHFQDEAPGLIFWHPKGWALWQQVEQYMRKVYQDNGYQEVKAPQILDLTLWKKTGHWDNYRENMFTTESENRVYGLKPMNCPGHVQIFNAGLHSYRELPLRYGEFGQCHRNEPSGSLHGMMRVRGFTQDDGHIFCTEDQLQDECAAFTALLQKVYKDFGFTEVLYKVATRPEKRIGSDEIWDKAETALMESLRRTGCEFEISPGEGAFYGPKVEYTLKDAIGRHWQCGTIQVDFSMPVRLGAEYVDQNDQRRPPVMLHRAILGSLERFIGMLIENHAGAMPPWLAPLQAVVCCISEHSAEYAAQITQSLKKQGFRVQADLRGEKITRKIREHSLQKIPYLLVVGDKEMQNGTVAVRGLGGLDLGVIALDDFIARLAEDISTRRNVTQLASAA</sequence>
<comment type="function">
    <text evidence="1">Catalyzes the attachment of threonine to tRNA(Thr) in a two-step reaction: L-threonine is first activated by ATP to form Thr-AMP and then transferred to the acceptor end of tRNA(Thr). Also edits incorrectly charged L-seryl-tRNA(Thr).</text>
</comment>
<comment type="catalytic activity">
    <reaction evidence="1">
        <text>tRNA(Thr) + L-threonine + ATP = L-threonyl-tRNA(Thr) + AMP + diphosphate + H(+)</text>
        <dbReference type="Rhea" id="RHEA:24624"/>
        <dbReference type="Rhea" id="RHEA-COMP:9670"/>
        <dbReference type="Rhea" id="RHEA-COMP:9704"/>
        <dbReference type="ChEBI" id="CHEBI:15378"/>
        <dbReference type="ChEBI" id="CHEBI:30616"/>
        <dbReference type="ChEBI" id="CHEBI:33019"/>
        <dbReference type="ChEBI" id="CHEBI:57926"/>
        <dbReference type="ChEBI" id="CHEBI:78442"/>
        <dbReference type="ChEBI" id="CHEBI:78534"/>
        <dbReference type="ChEBI" id="CHEBI:456215"/>
        <dbReference type="EC" id="6.1.1.3"/>
    </reaction>
</comment>
<comment type="cofactor">
    <cofactor evidence="1">
        <name>Zn(2+)</name>
        <dbReference type="ChEBI" id="CHEBI:29105"/>
    </cofactor>
    <text evidence="1">Binds 1 zinc ion per subunit.</text>
</comment>
<comment type="subunit">
    <text evidence="1">Homodimer.</text>
</comment>
<comment type="subcellular location">
    <subcellularLocation>
        <location evidence="1">Cytoplasm</location>
    </subcellularLocation>
</comment>
<comment type="similarity">
    <text evidence="1">Belongs to the class-II aminoacyl-tRNA synthetase family.</text>
</comment>
<keyword id="KW-0030">Aminoacyl-tRNA synthetase</keyword>
<keyword id="KW-0067">ATP-binding</keyword>
<keyword id="KW-0963">Cytoplasm</keyword>
<keyword id="KW-0436">Ligase</keyword>
<keyword id="KW-0479">Metal-binding</keyword>
<keyword id="KW-0547">Nucleotide-binding</keyword>
<keyword id="KW-0648">Protein biosynthesis</keyword>
<keyword id="KW-0694">RNA-binding</keyword>
<keyword id="KW-0820">tRNA-binding</keyword>
<keyword id="KW-0862">Zinc</keyword>
<name>SYT_BORPA</name>
<gene>
    <name evidence="1" type="primary">thrS</name>
    <name type="ordered locus">BPP1963</name>
</gene>